<organism>
    <name type="scientific">Streptococcus pneumoniae (strain CGSP14)</name>
    <dbReference type="NCBI Taxonomy" id="516950"/>
    <lineage>
        <taxon>Bacteria</taxon>
        <taxon>Bacillati</taxon>
        <taxon>Bacillota</taxon>
        <taxon>Bacilli</taxon>
        <taxon>Lactobacillales</taxon>
        <taxon>Streptococcaceae</taxon>
        <taxon>Streptococcus</taxon>
    </lineage>
</organism>
<accession>B2INF6</accession>
<comment type="function">
    <text evidence="1">Specifically methylates guanosine-37 in various tRNAs.</text>
</comment>
<comment type="catalytic activity">
    <reaction evidence="1">
        <text>guanosine(37) in tRNA + S-adenosyl-L-methionine = N(1)-methylguanosine(37) in tRNA + S-adenosyl-L-homocysteine + H(+)</text>
        <dbReference type="Rhea" id="RHEA:36899"/>
        <dbReference type="Rhea" id="RHEA-COMP:10145"/>
        <dbReference type="Rhea" id="RHEA-COMP:10147"/>
        <dbReference type="ChEBI" id="CHEBI:15378"/>
        <dbReference type="ChEBI" id="CHEBI:57856"/>
        <dbReference type="ChEBI" id="CHEBI:59789"/>
        <dbReference type="ChEBI" id="CHEBI:73542"/>
        <dbReference type="ChEBI" id="CHEBI:74269"/>
        <dbReference type="EC" id="2.1.1.228"/>
    </reaction>
</comment>
<comment type="subunit">
    <text evidence="1">Homodimer.</text>
</comment>
<comment type="subcellular location">
    <subcellularLocation>
        <location evidence="1">Cytoplasm</location>
    </subcellularLocation>
</comment>
<comment type="similarity">
    <text evidence="1">Belongs to the RNA methyltransferase TrmD family.</text>
</comment>
<sequence length="239" mass="27661">MKIDILTLFPEMFSPLEHSIVGKAREKGLLDIQYHNFRENAEKARHVDDEPYGGGQGMLLRVQPIFDSFDAIEKKNPRVILLDPAGKQFDQAYAEDLAQEEELIFICGHYEGYDERIKTLVTDEISLGDYVLTGGELAAMTMIDATVRLIPEVIGKESSHQDDSFSSGLLEYPQYTRPYDYRGMVVPDVLMSGHHEKIRQWRLYESLKKTYERRPDLLEHYQLTVEEEKMLAEIKENKE</sequence>
<name>TRMD_STRPS</name>
<proteinExistence type="inferred from homology"/>
<keyword id="KW-0963">Cytoplasm</keyword>
<keyword id="KW-0489">Methyltransferase</keyword>
<keyword id="KW-0949">S-adenosyl-L-methionine</keyword>
<keyword id="KW-0808">Transferase</keyword>
<keyword id="KW-0819">tRNA processing</keyword>
<evidence type="ECO:0000255" key="1">
    <source>
        <dbReference type="HAMAP-Rule" id="MF_00605"/>
    </source>
</evidence>
<protein>
    <recommendedName>
        <fullName evidence="1">tRNA (guanine-N(1)-)-methyltransferase</fullName>
        <ecNumber evidence="1">2.1.1.228</ecNumber>
    </recommendedName>
    <alternativeName>
        <fullName evidence="1">M1G-methyltransferase</fullName>
    </alternativeName>
    <alternativeName>
        <fullName evidence="1">tRNA [GM37] methyltransferase</fullName>
    </alternativeName>
</protein>
<feature type="chain" id="PRO_1000130216" description="tRNA (guanine-N(1)-)-methyltransferase">
    <location>
        <begin position="1"/>
        <end position="239"/>
    </location>
</feature>
<feature type="binding site" evidence="1">
    <location>
        <position position="108"/>
    </location>
    <ligand>
        <name>S-adenosyl-L-methionine</name>
        <dbReference type="ChEBI" id="CHEBI:59789"/>
    </ligand>
</feature>
<feature type="binding site" evidence="1">
    <location>
        <begin position="127"/>
        <end position="132"/>
    </location>
    <ligand>
        <name>S-adenosyl-L-methionine</name>
        <dbReference type="ChEBI" id="CHEBI:59789"/>
    </ligand>
</feature>
<reference key="1">
    <citation type="journal article" date="2009" name="BMC Genomics">
        <title>Genome evolution driven by host adaptations results in a more virulent and antimicrobial-resistant Streptococcus pneumoniae serotype 14.</title>
        <authorList>
            <person name="Ding F."/>
            <person name="Tang P."/>
            <person name="Hsu M.-H."/>
            <person name="Cui P."/>
            <person name="Hu S."/>
            <person name="Yu J."/>
            <person name="Chiu C.-H."/>
        </authorList>
    </citation>
    <scope>NUCLEOTIDE SEQUENCE [LARGE SCALE GENOMIC DNA]</scope>
    <source>
        <strain>CGSP14</strain>
    </source>
</reference>
<gene>
    <name evidence="1" type="primary">trmD</name>
    <name type="ordered locus">SPCG_0727</name>
</gene>
<dbReference type="EC" id="2.1.1.228" evidence="1"/>
<dbReference type="EMBL" id="CP001033">
    <property type="protein sequence ID" value="ACB89979.1"/>
    <property type="molecule type" value="Genomic_DNA"/>
</dbReference>
<dbReference type="RefSeq" id="WP_000686926.1">
    <property type="nucleotide sequence ID" value="NC_010582.1"/>
</dbReference>
<dbReference type="SMR" id="B2INF6"/>
<dbReference type="KEGG" id="spw:SPCG_0727"/>
<dbReference type="HOGENOM" id="CLU_047363_0_1_9"/>
<dbReference type="GO" id="GO:0005829">
    <property type="term" value="C:cytosol"/>
    <property type="evidence" value="ECO:0007669"/>
    <property type="project" value="TreeGrafter"/>
</dbReference>
<dbReference type="GO" id="GO:0052906">
    <property type="term" value="F:tRNA (guanine(37)-N1)-methyltransferase activity"/>
    <property type="evidence" value="ECO:0007669"/>
    <property type="project" value="UniProtKB-UniRule"/>
</dbReference>
<dbReference type="GO" id="GO:0002939">
    <property type="term" value="P:tRNA N1-guanine methylation"/>
    <property type="evidence" value="ECO:0007669"/>
    <property type="project" value="TreeGrafter"/>
</dbReference>
<dbReference type="CDD" id="cd18080">
    <property type="entry name" value="TrmD-like"/>
    <property type="match status" value="1"/>
</dbReference>
<dbReference type="FunFam" id="1.10.1270.20:FF:000001">
    <property type="entry name" value="tRNA (guanine-N(1)-)-methyltransferase"/>
    <property type="match status" value="1"/>
</dbReference>
<dbReference type="FunFam" id="3.40.1280.10:FF:000001">
    <property type="entry name" value="tRNA (guanine-N(1)-)-methyltransferase"/>
    <property type="match status" value="1"/>
</dbReference>
<dbReference type="Gene3D" id="3.40.1280.10">
    <property type="match status" value="1"/>
</dbReference>
<dbReference type="Gene3D" id="1.10.1270.20">
    <property type="entry name" value="tRNA(m1g37)methyltransferase, domain 2"/>
    <property type="match status" value="1"/>
</dbReference>
<dbReference type="HAMAP" id="MF_00605">
    <property type="entry name" value="TrmD"/>
    <property type="match status" value="1"/>
</dbReference>
<dbReference type="InterPro" id="IPR029028">
    <property type="entry name" value="Alpha/beta_knot_MTases"/>
</dbReference>
<dbReference type="InterPro" id="IPR023148">
    <property type="entry name" value="tRNA_m1G_MeTrfase_C_sf"/>
</dbReference>
<dbReference type="InterPro" id="IPR002649">
    <property type="entry name" value="tRNA_m1G_MeTrfase_TrmD"/>
</dbReference>
<dbReference type="InterPro" id="IPR029026">
    <property type="entry name" value="tRNA_m1G_MTases_N"/>
</dbReference>
<dbReference type="InterPro" id="IPR016009">
    <property type="entry name" value="tRNA_MeTrfase_TRMD/TRM10"/>
</dbReference>
<dbReference type="NCBIfam" id="NF000648">
    <property type="entry name" value="PRK00026.1"/>
    <property type="match status" value="1"/>
</dbReference>
<dbReference type="NCBIfam" id="TIGR00088">
    <property type="entry name" value="trmD"/>
    <property type="match status" value="1"/>
</dbReference>
<dbReference type="PANTHER" id="PTHR46417">
    <property type="entry name" value="TRNA (GUANINE-N(1)-)-METHYLTRANSFERASE"/>
    <property type="match status" value="1"/>
</dbReference>
<dbReference type="PANTHER" id="PTHR46417:SF1">
    <property type="entry name" value="TRNA (GUANINE-N(1)-)-METHYLTRANSFERASE"/>
    <property type="match status" value="1"/>
</dbReference>
<dbReference type="Pfam" id="PF01746">
    <property type="entry name" value="tRNA_m1G_MT"/>
    <property type="match status" value="1"/>
</dbReference>
<dbReference type="PIRSF" id="PIRSF000386">
    <property type="entry name" value="tRNA_mtase"/>
    <property type="match status" value="1"/>
</dbReference>
<dbReference type="SUPFAM" id="SSF75217">
    <property type="entry name" value="alpha/beta knot"/>
    <property type="match status" value="1"/>
</dbReference>